<proteinExistence type="inferred from homology"/>
<name>RL3_NANEQ</name>
<dbReference type="EMBL" id="AE017199">
    <property type="protein sequence ID" value="AAR39277.1"/>
    <property type="molecule type" value="Genomic_DNA"/>
</dbReference>
<dbReference type="SMR" id="P60458"/>
<dbReference type="STRING" id="228908.NEQ433"/>
<dbReference type="EnsemblBacteria" id="AAR39277">
    <property type="protein sequence ID" value="AAR39277"/>
    <property type="gene ID" value="NEQ433"/>
</dbReference>
<dbReference type="KEGG" id="neq:NEQ433"/>
<dbReference type="PATRIC" id="fig|228908.8.peg.444"/>
<dbReference type="HOGENOM" id="CLU_033361_2_0_2"/>
<dbReference type="Proteomes" id="UP000000578">
    <property type="component" value="Chromosome"/>
</dbReference>
<dbReference type="GO" id="GO:0022625">
    <property type="term" value="C:cytosolic large ribosomal subunit"/>
    <property type="evidence" value="ECO:0007669"/>
    <property type="project" value="TreeGrafter"/>
</dbReference>
<dbReference type="GO" id="GO:0019843">
    <property type="term" value="F:rRNA binding"/>
    <property type="evidence" value="ECO:0007669"/>
    <property type="project" value="UniProtKB-UniRule"/>
</dbReference>
<dbReference type="GO" id="GO:0003735">
    <property type="term" value="F:structural constituent of ribosome"/>
    <property type="evidence" value="ECO:0007669"/>
    <property type="project" value="InterPro"/>
</dbReference>
<dbReference type="GO" id="GO:0006412">
    <property type="term" value="P:translation"/>
    <property type="evidence" value="ECO:0007669"/>
    <property type="project" value="UniProtKB-UniRule"/>
</dbReference>
<dbReference type="Gene3D" id="3.30.1430.10">
    <property type="match status" value="1"/>
</dbReference>
<dbReference type="Gene3D" id="4.10.960.10">
    <property type="entry name" value="Ribosomal protein L3, domain 3"/>
    <property type="match status" value="1"/>
</dbReference>
<dbReference type="Gene3D" id="2.40.30.10">
    <property type="entry name" value="Translation factors"/>
    <property type="match status" value="1"/>
</dbReference>
<dbReference type="HAMAP" id="MF_01325_A">
    <property type="entry name" value="Ribosomal_uL3_A"/>
    <property type="match status" value="1"/>
</dbReference>
<dbReference type="InterPro" id="IPR045077">
    <property type="entry name" value="L3_arc_euk"/>
</dbReference>
<dbReference type="InterPro" id="IPR044892">
    <property type="entry name" value="Ribosomal_L3_dom_3_arc_sf"/>
</dbReference>
<dbReference type="InterPro" id="IPR000597">
    <property type="entry name" value="Ribosomal_uL3"/>
</dbReference>
<dbReference type="InterPro" id="IPR019928">
    <property type="entry name" value="Ribosomal_uL3_arc"/>
</dbReference>
<dbReference type="InterPro" id="IPR019926">
    <property type="entry name" value="Ribosomal_uL3_CS"/>
</dbReference>
<dbReference type="InterPro" id="IPR009000">
    <property type="entry name" value="Transl_B-barrel_sf"/>
</dbReference>
<dbReference type="NCBIfam" id="TIGR03626">
    <property type="entry name" value="L3_arch"/>
    <property type="match status" value="1"/>
</dbReference>
<dbReference type="NCBIfam" id="NF003261">
    <property type="entry name" value="PRK04231.1"/>
    <property type="match status" value="1"/>
</dbReference>
<dbReference type="PANTHER" id="PTHR11363">
    <property type="entry name" value="60S RIBOSOMAL PROTEIN L3-RELATED"/>
    <property type="match status" value="1"/>
</dbReference>
<dbReference type="PANTHER" id="PTHR11363:SF5">
    <property type="entry name" value="LARGE RIBOSOMAL SUBUNIT PROTEIN UL3"/>
    <property type="match status" value="1"/>
</dbReference>
<dbReference type="Pfam" id="PF00297">
    <property type="entry name" value="Ribosomal_L3"/>
    <property type="match status" value="1"/>
</dbReference>
<dbReference type="SUPFAM" id="SSF50447">
    <property type="entry name" value="Translation proteins"/>
    <property type="match status" value="1"/>
</dbReference>
<dbReference type="PROSITE" id="PS00474">
    <property type="entry name" value="RIBOSOMAL_L3"/>
    <property type="match status" value="1"/>
</dbReference>
<reference key="1">
    <citation type="journal article" date="2003" name="Proc. Natl. Acad. Sci. U.S.A.">
        <title>The genome of Nanoarchaeum equitans: insights into early archaeal evolution and derived parasitism.</title>
        <authorList>
            <person name="Waters E."/>
            <person name="Hohn M.J."/>
            <person name="Ahel I."/>
            <person name="Graham D.E."/>
            <person name="Adams M.D."/>
            <person name="Barnstead M."/>
            <person name="Beeson K.Y."/>
            <person name="Bibbs L."/>
            <person name="Bolanos R."/>
            <person name="Keller M."/>
            <person name="Kretz K."/>
            <person name="Lin X."/>
            <person name="Mathur E."/>
            <person name="Ni J."/>
            <person name="Podar M."/>
            <person name="Richardson T."/>
            <person name="Sutton G.G."/>
            <person name="Simon M."/>
            <person name="Soell D."/>
            <person name="Stetter K.O."/>
            <person name="Short J.M."/>
            <person name="Noorderwier M."/>
        </authorList>
    </citation>
    <scope>NUCLEOTIDE SEQUENCE [LARGE SCALE GENOMIC DNA]</scope>
    <source>
        <strain>Kin4-M</strain>
    </source>
</reference>
<gene>
    <name evidence="1" type="primary">rpl3</name>
    <name type="ordered locus">NEQ433</name>
</gene>
<organism>
    <name type="scientific">Nanoarchaeum equitans (strain Kin4-M)</name>
    <dbReference type="NCBI Taxonomy" id="228908"/>
    <lineage>
        <taxon>Archaea</taxon>
        <taxon>Nanobdellota</taxon>
        <taxon>Candidatus Nanoarchaeia</taxon>
        <taxon>Nanoarchaeales</taxon>
        <taxon>Nanoarchaeaceae</taxon>
        <taxon>Nanoarchaeum</taxon>
    </lineage>
</organism>
<sequence length="321" mass="36524">MPQHGRHAPRRGSMGFWPRKRASRIYPRIKTWPKIEEIKPLAFAAYKVGMTHTILNINGERVFTPVTVLEAPELLVIGAKAYKKENGALKEISSLYFNDLPQYVFRKIPKLKNYNFEEKKEQFLSKADNADEVKIIVSTQPWKIKLKKTPEIFDIPIGGSDVNKKLEYALSLLGKELSINDVFKEGQYVDVIAVTKGKGFQGVIKRFHVHRRQHKSEKGVRKVGAIGSRGPGRIFPTVPMPGQMGYHRRTEYNKLIIKIGEPLNVEGGWVRYGQVIGPTILLKGSVPGPRKRLIILREAIRPPRKQEKVEGIEYISLSPKN</sequence>
<evidence type="ECO:0000255" key="1">
    <source>
        <dbReference type="HAMAP-Rule" id="MF_01325"/>
    </source>
</evidence>
<evidence type="ECO:0000305" key="2"/>
<protein>
    <recommendedName>
        <fullName evidence="1">Large ribosomal subunit protein uL3</fullName>
    </recommendedName>
    <alternativeName>
        <fullName evidence="2">50S ribosomal protein L3</fullName>
    </alternativeName>
</protein>
<feature type="chain" id="PRO_0000077215" description="Large ribosomal subunit protein uL3">
    <location>
        <begin position="1"/>
        <end position="321"/>
    </location>
</feature>
<comment type="function">
    <text evidence="1">One of the primary rRNA binding proteins, it binds directly near the 3'-end of the 23S rRNA, where it nucleates assembly of the 50S subunit.</text>
</comment>
<comment type="subunit">
    <text evidence="1">Part of the 50S ribosomal subunit. Forms a cluster with proteins L14 and L24e.</text>
</comment>
<comment type="similarity">
    <text evidence="1">Belongs to the universal ribosomal protein uL3 family.</text>
</comment>
<keyword id="KW-1185">Reference proteome</keyword>
<keyword id="KW-0687">Ribonucleoprotein</keyword>
<keyword id="KW-0689">Ribosomal protein</keyword>
<keyword id="KW-0694">RNA-binding</keyword>
<keyword id="KW-0699">rRNA-binding</keyword>
<accession>P60458</accession>